<gene>
    <name type="primary">degS</name>
    <name type="synonym">hhoB</name>
    <name type="synonym">htrH</name>
    <name type="ordered locus">b3235</name>
    <name type="ordered locus">JW3204</name>
</gene>
<accession>P0AEE3</accession>
<accession>P31137</accession>
<accession>Q2M8X8</accession>
<feature type="chain" id="PRO_0000026938" description="Serine endoprotease DegS">
    <location>
        <begin position="1"/>
        <end position="355"/>
    </location>
</feature>
<feature type="topological domain" description="Cytoplasmic" evidence="21">
    <location>
        <begin position="1"/>
        <end position="4"/>
    </location>
</feature>
<feature type="transmembrane region" description="Helical" evidence="1">
    <location>
        <begin position="5"/>
        <end position="27"/>
    </location>
</feature>
<feature type="topological domain" description="Periplasmic" evidence="4">
    <location>
        <begin position="28"/>
        <end position="355"/>
    </location>
</feature>
<feature type="domain" description="PDZ" evidence="2">
    <location>
        <begin position="281"/>
        <end position="326"/>
    </location>
</feature>
<feature type="active site" description="Charge relay system" evidence="8 9 17">
    <location>
        <position position="96"/>
    </location>
</feature>
<feature type="active site" description="Charge relay system" evidence="8 9 17">
    <location>
        <position position="126"/>
    </location>
</feature>
<feature type="active site" description="Charge relay system" evidence="8 9 17">
    <location>
        <position position="201"/>
    </location>
</feature>
<feature type="binding site">
    <location>
        <position position="184"/>
    </location>
    <ligand>
        <name>substrate</name>
    </ligand>
</feature>
<feature type="binding site">
    <location>
        <begin position="259"/>
        <end position="264"/>
    </location>
    <ligand>
        <name>substrate</name>
    </ligand>
</feature>
<feature type="binding site">
    <location>
        <position position="351"/>
    </location>
    <ligand>
        <name>substrate</name>
    </ligand>
</feature>
<feature type="mutagenesis site" description="Causes substantial reduction of peptidase activity. Binds activator peptides." evidence="11 12">
    <original>D</original>
    <variation>A</variation>
    <location>
        <position position="122"/>
    </location>
</feature>
<feature type="mutagenesis site" description="Loss of peptidase activity. Binds activator peptides." evidence="8 11 12 17">
    <original>Y</original>
    <variation>A</variation>
    <location>
        <position position="162"/>
    </location>
</feature>
<feature type="mutagenesis site" description="Loss of 60% of peptidase activity." evidence="8 11 12 17">
    <original>Y</original>
    <variation>F</variation>
    <location>
        <position position="162"/>
    </location>
</feature>
<feature type="mutagenesis site" description="Causes substantial reduction of peptidase activity." evidence="12 17">
    <original>R</original>
    <variation>A</variation>
    <location>
        <position position="178"/>
    </location>
</feature>
<feature type="mutagenesis site" description="Loss of peptidase activity. Also affects an interface contact between the PDZ and protease domains." evidence="8 12">
    <original>P</original>
    <variation>A</variation>
    <location>
        <position position="183"/>
    </location>
</feature>
<feature type="mutagenesis site" description="Loss of peptidase activity." evidence="17">
    <original>Q</original>
    <variation>A</variation>
    <location>
        <position position="191"/>
    </location>
</feature>
<feature type="mutagenesis site" description="Behaves like wild-type." evidence="16 17 18">
    <original>H</original>
    <variation>A</variation>
    <location>
        <position position="198"/>
    </location>
</feature>
<feature type="mutagenesis site" description="Partially bypasses the requirement for peptide activation, acts synergistically with mutations that disrupt contacts between the protease and PDZ domains and with an rseB disruption." evidence="16 17 18">
    <original>H</original>
    <variation>P</variation>
    <location>
        <position position="198"/>
    </location>
</feature>
<feature type="mutagenesis site" description="Does not restore RseA degradation in a degS disruption. Loss of RseA degradation." evidence="3">
    <original>S</original>
    <variation>A</variation>
    <location>
        <position position="201"/>
    </location>
</feature>
<feature type="mutagenesis site" description="Loss of peptidase activity." evidence="8 12">
    <original>E</original>
    <variation>A</variation>
    <location>
        <position position="227"/>
    </location>
</feature>
<feature type="mutagenesis site" description="Increases the basal rate of RseA cleavage 3-fold, acts synergistically with an rseB disruption." evidence="12 18">
    <original>K</original>
    <variation>D</variation>
    <location>
        <position position="243"/>
    </location>
</feature>
<feature type="mutagenesis site" description="Dramatically increases the basal rate of RseA cleavage." evidence="12">
    <original>R</original>
    <variation>A</variation>
    <location>
        <position position="256"/>
    </location>
</feature>
<feature type="mutagenesis site" description="Dramatically increases the basal rate of RseA cleavage." evidence="12">
    <original>R</original>
    <variation>D</variation>
    <location>
        <position position="256"/>
    </location>
</feature>
<feature type="mutagenesis site" description="Dramatically increases the basal rate of RseA cleavage." evidence="12">
    <original>D</original>
    <variation>A</variation>
    <location>
        <position position="320"/>
    </location>
</feature>
<feature type="sequence conflict" description="In Ref. 5; M24777." evidence="20" ref="5">
    <original>R</original>
    <variation>A</variation>
    <location>
        <position position="253"/>
    </location>
</feature>
<feature type="sequence conflict" description="In Ref. 5; M24777." evidence="20" ref="5">
    <original>V</original>
    <variation>E</variation>
    <location>
        <position position="307"/>
    </location>
</feature>
<feature type="helix" evidence="23">
    <location>
        <begin position="39"/>
        <end position="41"/>
    </location>
</feature>
<feature type="helix" evidence="24">
    <location>
        <begin position="48"/>
        <end position="54"/>
    </location>
</feature>
<feature type="helix" evidence="24">
    <location>
        <begin position="55"/>
        <end position="57"/>
    </location>
</feature>
<feature type="strand" evidence="24">
    <location>
        <begin position="58"/>
        <end position="64"/>
    </location>
</feature>
<feature type="turn" evidence="24">
    <location>
        <begin position="67"/>
        <end position="69"/>
    </location>
</feature>
<feature type="strand" evidence="24">
    <location>
        <begin position="76"/>
        <end position="86"/>
    </location>
</feature>
<feature type="turn" evidence="24">
    <location>
        <begin position="87"/>
        <end position="89"/>
    </location>
</feature>
<feature type="strand" evidence="24">
    <location>
        <begin position="90"/>
        <end position="94"/>
    </location>
</feature>
<feature type="helix" evidence="24">
    <location>
        <begin position="95"/>
        <end position="98"/>
    </location>
</feature>
<feature type="strand" evidence="24">
    <location>
        <begin position="102"/>
        <end position="107"/>
    </location>
</feature>
<feature type="strand" evidence="24">
    <location>
        <begin position="113"/>
        <end position="122"/>
    </location>
</feature>
<feature type="turn" evidence="24">
    <location>
        <begin position="123"/>
        <end position="126"/>
    </location>
</feature>
<feature type="strand" evidence="24">
    <location>
        <begin position="127"/>
        <end position="131"/>
    </location>
</feature>
<feature type="strand" evidence="24">
    <location>
        <begin position="153"/>
        <end position="159"/>
    </location>
</feature>
<feature type="helix" evidence="24">
    <location>
        <begin position="161"/>
        <end position="163"/>
    </location>
</feature>
<feature type="strand" evidence="24">
    <location>
        <begin position="166"/>
        <end position="176"/>
    </location>
</feature>
<feature type="strand" evidence="22">
    <location>
        <begin position="180"/>
        <end position="182"/>
    </location>
</feature>
<feature type="strand" evidence="25">
    <location>
        <begin position="183"/>
        <end position="185"/>
    </location>
</feature>
<feature type="helix" evidence="22">
    <location>
        <begin position="186"/>
        <end position="188"/>
    </location>
</feature>
<feature type="strand" evidence="24">
    <location>
        <begin position="190"/>
        <end position="192"/>
    </location>
</feature>
<feature type="turn" evidence="23">
    <location>
        <begin position="198"/>
        <end position="202"/>
    </location>
</feature>
<feature type="strand" evidence="24">
    <location>
        <begin position="204"/>
        <end position="206"/>
    </location>
</feature>
<feature type="strand" evidence="24">
    <location>
        <begin position="212"/>
        <end position="216"/>
    </location>
</feature>
<feature type="strand" evidence="23">
    <location>
        <begin position="220"/>
        <end position="225"/>
    </location>
</feature>
<feature type="strand" evidence="24">
    <location>
        <begin position="233"/>
        <end position="237"/>
    </location>
</feature>
<feature type="helix" evidence="24">
    <location>
        <begin position="238"/>
        <end position="251"/>
    </location>
</feature>
<feature type="strand" evidence="23">
    <location>
        <begin position="261"/>
        <end position="265"/>
    </location>
</feature>
<feature type="strand" evidence="23">
    <location>
        <begin position="271"/>
        <end position="274"/>
    </location>
</feature>
<feature type="strand" evidence="23">
    <location>
        <begin position="276"/>
        <end position="278"/>
    </location>
</feature>
<feature type="strand" evidence="23">
    <location>
        <begin position="282"/>
        <end position="287"/>
    </location>
</feature>
<feature type="strand" evidence="22">
    <location>
        <begin position="289"/>
        <end position="291"/>
    </location>
</feature>
<feature type="turn" evidence="23">
    <location>
        <begin position="292"/>
        <end position="296"/>
    </location>
</feature>
<feature type="strand" evidence="23">
    <location>
        <begin position="304"/>
        <end position="307"/>
    </location>
</feature>
<feature type="helix" evidence="23">
    <location>
        <begin position="315"/>
        <end position="323"/>
    </location>
</feature>
<feature type="strand" evidence="23">
    <location>
        <begin position="330"/>
        <end position="339"/>
    </location>
</feature>
<feature type="strand" evidence="23">
    <location>
        <begin position="341"/>
        <end position="347"/>
    </location>
</feature>
<comment type="function">
    <text evidence="3 4 5 6 7 10 11 13 14 15">A site-1 protease (S1P) that cleaves the peptide bond between 'Val-148' and 'Ser-149' in RseA. Part of a regulated intramembrane proteolysis (RIP) cascade. When heat shock or other environmental stresses disrupt protein folding in the periplasm, DegS senses the accumulation of unassembled outer membrane porins (OMP) and then initiates RseA (anti sigma-E factor) degradation by cleaving its periplasmic domain, making it a substrate for subsequent cleavage by RseP. This cascade ultimately leads to the sigma-E-driven expression of a variety of factors dealing with folding stress in the periplasm and OMP assembly. Required for basal and stress-induced degradation of RseA.</text>
</comment>
<comment type="catalytic activity">
    <reaction>
        <text>Acts on substrates that are at least partially unfolded. The cleavage site P1 residue is normally between a pair of hydrophobic residues, such as Val-|-Val.</text>
        <dbReference type="EC" id="3.4.21.107"/>
    </reaction>
</comment>
<comment type="activity regulation">
    <text evidence="7 10 11 16 17">Allosterically activated by the C-terminus of exposed OMP peptides (consensus Tyr-X-Phe-COOH); cleavage only occurs in the presence of peptides. Inhibited when RseB is bound to RseA.</text>
</comment>
<comment type="biophysicochemical properties">
    <kinetics>
        <KM evidence="12 16">33 uM for RseA-YQF</KM>
        <Vmax evidence="12 16">0.6 umol/sec/mg enzyme</Vmax>
    </kinetics>
</comment>
<comment type="subunit">
    <text evidence="7 8 9 11 12 16 17">Homotrimer.</text>
</comment>
<comment type="interaction">
    <interactant intactId="EBI-1132101">
        <id>P0AEE3</id>
    </interactant>
    <interactant intactId="EBI-1132101">
        <id>P0AEE3</id>
        <label>degS</label>
    </interactant>
    <organismsDiffer>false</organismsDiffer>
    <experiments>3</experiments>
</comment>
<comment type="interaction">
    <interactant intactId="EBI-1132101">
        <id>P0AEE3</id>
    </interactant>
    <interactant intactId="EBI-1117560">
        <id>P0AFX7</id>
        <label>rseA</label>
    </interactant>
    <organismsDiffer>false</organismsDiffer>
    <experiments>7</experiments>
</comment>
<comment type="subcellular location">
    <subcellularLocation>
        <location evidence="21">Cell inner membrane</location>
        <topology evidence="21">Single-pass membrane protein</topology>
    </subcellularLocation>
    <text evidence="4">It is unclear how this protein is anchored to the inner membrane, programs predict a signal sequence, but replacing the N-terminal 26 residues with a known signal sequence gives a protein unable to fully complement a disruption mutant.</text>
</comment>
<comment type="domain">
    <text evidence="7 10">The PDZ domain probably binds peptides ending with C-terminal Tyr-X-Phe sequences, which activates proteolysis. In the absence of OMP peptides the PDZ domain inhibits peptidase activity.</text>
</comment>
<comment type="disruption phenotype">
    <text evidence="3 4 5 6 19">Small, slowly growing colonies. 5-fold decrease in basal sigma-E (RpoE) activity, loss of regular growth regulation of sigma-E. No proteolysis of full-length RseA.</text>
</comment>
<comment type="miscellaneous">
    <text>Regulated intramembrane proteolysis (RIP) occurs when an extracytoplasmic signal triggers a concerted proteolytic cascade to transmit information and elicit cellular responses. A membrane-spanning regulatory substrate protein is first cut extracytoplasmically (site-1 protease, S1P, this enzyme), then within the membrane itself (site-2 protease, S2P), while cytoplasmic proteases finish degrading the regulatory protein, liberating the effector protein.</text>
</comment>
<comment type="similarity">
    <text evidence="20">Belongs to the peptidase S1C family.</text>
</comment>
<keyword id="KW-0002">3D-structure</keyword>
<keyword id="KW-0997">Cell inner membrane</keyword>
<keyword id="KW-1003">Cell membrane</keyword>
<keyword id="KW-0378">Hydrolase</keyword>
<keyword id="KW-0472">Membrane</keyword>
<keyword id="KW-0645">Protease</keyword>
<keyword id="KW-1185">Reference proteome</keyword>
<keyword id="KW-0720">Serine protease</keyword>
<keyword id="KW-0812">Transmembrane</keyword>
<keyword id="KW-1133">Transmembrane helix</keyword>
<dbReference type="EC" id="3.4.21.107"/>
<dbReference type="EMBL" id="U15661">
    <property type="protein sequence ID" value="AAC43993.1"/>
    <property type="molecule type" value="Genomic_DNA"/>
</dbReference>
<dbReference type="EMBL" id="U32495">
    <property type="protein sequence ID" value="AAC44006.1"/>
    <property type="molecule type" value="Genomic_DNA"/>
</dbReference>
<dbReference type="EMBL" id="U18997">
    <property type="protein sequence ID" value="AAA58037.1"/>
    <property type="molecule type" value="Genomic_DNA"/>
</dbReference>
<dbReference type="EMBL" id="U00096">
    <property type="protein sequence ID" value="AAC76267.1"/>
    <property type="molecule type" value="Genomic_DNA"/>
</dbReference>
<dbReference type="EMBL" id="AP009048">
    <property type="protein sequence ID" value="BAE77278.1"/>
    <property type="molecule type" value="Genomic_DNA"/>
</dbReference>
<dbReference type="EMBL" id="M24777">
    <property type="status" value="NOT_ANNOTATED_CDS"/>
    <property type="molecule type" value="Unassigned_DNA"/>
</dbReference>
<dbReference type="PIR" id="JC6052">
    <property type="entry name" value="JC6052"/>
</dbReference>
<dbReference type="RefSeq" id="NP_417702.1">
    <property type="nucleotide sequence ID" value="NC_000913.3"/>
</dbReference>
<dbReference type="RefSeq" id="WP_000497723.1">
    <property type="nucleotide sequence ID" value="NZ_STEB01000012.1"/>
</dbReference>
<dbReference type="PDB" id="1SOT">
    <property type="method" value="X-ray"/>
    <property type="resolution" value="2.30 A"/>
    <property type="chains" value="A/B/C=43-355"/>
</dbReference>
<dbReference type="PDB" id="1SOZ">
    <property type="method" value="X-ray"/>
    <property type="resolution" value="2.40 A"/>
    <property type="chains" value="A/B/C=43-355"/>
</dbReference>
<dbReference type="PDB" id="1TE0">
    <property type="method" value="X-ray"/>
    <property type="resolution" value="2.20 A"/>
    <property type="chains" value="A/B=37-354"/>
</dbReference>
<dbReference type="PDB" id="1VCW">
    <property type="method" value="X-ray"/>
    <property type="resolution" value="3.05 A"/>
    <property type="chains" value="A/B/C=43-355"/>
</dbReference>
<dbReference type="PDB" id="2QF0">
    <property type="method" value="X-ray"/>
    <property type="resolution" value="2.50 A"/>
    <property type="chains" value="A/B/C/D/E/F/G/H/I=27-256"/>
</dbReference>
<dbReference type="PDB" id="2QF3">
    <property type="method" value="X-ray"/>
    <property type="resolution" value="2.04 A"/>
    <property type="chains" value="A/B/C=27-256"/>
</dbReference>
<dbReference type="PDB" id="2QGR">
    <property type="method" value="X-ray"/>
    <property type="resolution" value="2.70 A"/>
    <property type="chains" value="A=27-256"/>
</dbReference>
<dbReference type="PDB" id="2R3U">
    <property type="method" value="X-ray"/>
    <property type="resolution" value="2.60 A"/>
    <property type="chains" value="A/B/C=43-252"/>
</dbReference>
<dbReference type="PDB" id="2R3Y">
    <property type="method" value="X-ray"/>
    <property type="resolution" value="2.50 A"/>
    <property type="chains" value="A/B/C=43-355"/>
</dbReference>
<dbReference type="PDB" id="2RCE">
    <property type="method" value="X-ray"/>
    <property type="resolution" value="2.35 A"/>
    <property type="chains" value="A/B/C/D/E/F/G/H/I=27-256"/>
</dbReference>
<dbReference type="PDB" id="3B8J">
    <property type="method" value="X-ray"/>
    <property type="resolution" value="2.51 A"/>
    <property type="chains" value="A=27-256"/>
</dbReference>
<dbReference type="PDB" id="3GCN">
    <property type="method" value="X-ray"/>
    <property type="resolution" value="3.00 A"/>
    <property type="chains" value="A=27-355"/>
</dbReference>
<dbReference type="PDB" id="3GCO">
    <property type="method" value="X-ray"/>
    <property type="resolution" value="2.80 A"/>
    <property type="chains" value="A=27-355"/>
</dbReference>
<dbReference type="PDB" id="3GDS">
    <property type="method" value="X-ray"/>
    <property type="resolution" value="2.85 A"/>
    <property type="chains" value="A=27-355"/>
</dbReference>
<dbReference type="PDB" id="3GDU">
    <property type="method" value="X-ray"/>
    <property type="resolution" value="3.00 A"/>
    <property type="chains" value="A/B/C=27-355"/>
</dbReference>
<dbReference type="PDB" id="3GDV">
    <property type="method" value="X-ray"/>
    <property type="resolution" value="2.49 A"/>
    <property type="chains" value="A/B/C=27-355"/>
</dbReference>
<dbReference type="PDB" id="3LGI">
    <property type="method" value="X-ray"/>
    <property type="resolution" value="1.65 A"/>
    <property type="chains" value="A/B/C=27-256"/>
</dbReference>
<dbReference type="PDB" id="3LGT">
    <property type="method" value="X-ray"/>
    <property type="resolution" value="2.68 A"/>
    <property type="chains" value="A=27-256"/>
</dbReference>
<dbReference type="PDB" id="3LGU">
    <property type="method" value="X-ray"/>
    <property type="resolution" value="2.46 A"/>
    <property type="chains" value="A=27-256"/>
</dbReference>
<dbReference type="PDB" id="3LGV">
    <property type="method" value="X-ray"/>
    <property type="resolution" value="2.73 A"/>
    <property type="chains" value="A/B/C/D/E/F/G/H/I=27-256"/>
</dbReference>
<dbReference type="PDB" id="3LGW">
    <property type="method" value="X-ray"/>
    <property type="resolution" value="2.50 A"/>
    <property type="chains" value="A=27-256"/>
</dbReference>
<dbReference type="PDB" id="3LGY">
    <property type="method" value="X-ray"/>
    <property type="resolution" value="2.70 A"/>
    <property type="chains" value="A=27-256"/>
</dbReference>
<dbReference type="PDB" id="3LH1">
    <property type="method" value="X-ray"/>
    <property type="resolution" value="2.51 A"/>
    <property type="chains" value="A=27-256"/>
</dbReference>
<dbReference type="PDB" id="3LH3">
    <property type="method" value="X-ray"/>
    <property type="resolution" value="2.35 A"/>
    <property type="chains" value="A/B/C/D/E/F/G/H/I=27-256"/>
</dbReference>
<dbReference type="PDB" id="4RQY">
    <property type="method" value="X-ray"/>
    <property type="resolution" value="2.20 A"/>
    <property type="chains" value="A/B=37-355"/>
</dbReference>
<dbReference type="PDB" id="4RQZ">
    <property type="method" value="X-ray"/>
    <property type="resolution" value="2.40 A"/>
    <property type="chains" value="A/B/C=43-355"/>
</dbReference>
<dbReference type="PDB" id="4RR0">
    <property type="method" value="X-ray"/>
    <property type="resolution" value="3.05 A"/>
    <property type="chains" value="A/B/C=43-355"/>
</dbReference>
<dbReference type="PDB" id="4RR1">
    <property type="method" value="X-ray"/>
    <property type="resolution" value="2.30 A"/>
    <property type="chains" value="A/B/C=43-355"/>
</dbReference>
<dbReference type="PDB" id="6EW9">
    <property type="method" value="X-ray"/>
    <property type="resolution" value="2.20 A"/>
    <property type="chains" value="A/B/C=43-355"/>
</dbReference>
<dbReference type="PDBsum" id="1SOT"/>
<dbReference type="PDBsum" id="1SOZ"/>
<dbReference type="PDBsum" id="1TE0"/>
<dbReference type="PDBsum" id="1VCW"/>
<dbReference type="PDBsum" id="2QF0"/>
<dbReference type="PDBsum" id="2QF3"/>
<dbReference type="PDBsum" id="2QGR"/>
<dbReference type="PDBsum" id="2R3U"/>
<dbReference type="PDBsum" id="2R3Y"/>
<dbReference type="PDBsum" id="2RCE"/>
<dbReference type="PDBsum" id="3B8J"/>
<dbReference type="PDBsum" id="3GCN"/>
<dbReference type="PDBsum" id="3GCO"/>
<dbReference type="PDBsum" id="3GDS"/>
<dbReference type="PDBsum" id="3GDU"/>
<dbReference type="PDBsum" id="3GDV"/>
<dbReference type="PDBsum" id="3LGI"/>
<dbReference type="PDBsum" id="3LGT"/>
<dbReference type="PDBsum" id="3LGU"/>
<dbReference type="PDBsum" id="3LGV"/>
<dbReference type="PDBsum" id="3LGW"/>
<dbReference type="PDBsum" id="3LGY"/>
<dbReference type="PDBsum" id="3LH1"/>
<dbReference type="PDBsum" id="3LH3"/>
<dbReference type="PDBsum" id="4RQY"/>
<dbReference type="PDBsum" id="4RQZ"/>
<dbReference type="PDBsum" id="4RR0"/>
<dbReference type="PDBsum" id="4RR1"/>
<dbReference type="PDBsum" id="6EW9"/>
<dbReference type="SMR" id="P0AEE3"/>
<dbReference type="BioGRID" id="4261915">
    <property type="interactions" value="9"/>
</dbReference>
<dbReference type="DIP" id="DIP-39580N"/>
<dbReference type="FunCoup" id="P0AEE3">
    <property type="interactions" value="233"/>
</dbReference>
<dbReference type="IntAct" id="P0AEE3">
    <property type="interactions" value="3"/>
</dbReference>
<dbReference type="STRING" id="511145.b3235"/>
<dbReference type="MEROPS" id="S01.275"/>
<dbReference type="jPOST" id="P0AEE3"/>
<dbReference type="PaxDb" id="511145-b3235"/>
<dbReference type="EnsemblBacteria" id="AAC76267">
    <property type="protein sequence ID" value="AAC76267"/>
    <property type="gene ID" value="b3235"/>
</dbReference>
<dbReference type="GeneID" id="93778751"/>
<dbReference type="GeneID" id="947865"/>
<dbReference type="KEGG" id="ecj:JW3204"/>
<dbReference type="KEGG" id="eco:b3235"/>
<dbReference type="KEGG" id="ecoc:C3026_17600"/>
<dbReference type="PATRIC" id="fig|1411691.4.peg.3493"/>
<dbReference type="EchoBASE" id="EB1605"/>
<dbReference type="eggNOG" id="COG0265">
    <property type="taxonomic scope" value="Bacteria"/>
</dbReference>
<dbReference type="HOGENOM" id="CLU_020120_2_2_6"/>
<dbReference type="InParanoid" id="P0AEE3"/>
<dbReference type="OMA" id="IMSPEGY"/>
<dbReference type="OrthoDB" id="9758917at2"/>
<dbReference type="PhylomeDB" id="P0AEE3"/>
<dbReference type="BioCyc" id="EcoCyc:EG11652-MONOMER"/>
<dbReference type="BioCyc" id="MetaCyc:EG11652-MONOMER"/>
<dbReference type="BRENDA" id="3.4.21.107">
    <property type="organism ID" value="2026"/>
</dbReference>
<dbReference type="EvolutionaryTrace" id="P0AEE3"/>
<dbReference type="PRO" id="PR:P0AEE3"/>
<dbReference type="Proteomes" id="UP000000625">
    <property type="component" value="Chromosome"/>
</dbReference>
<dbReference type="GO" id="GO:0030288">
    <property type="term" value="C:outer membrane-bounded periplasmic space"/>
    <property type="evidence" value="ECO:0000314"/>
    <property type="project" value="EcoCyc"/>
</dbReference>
<dbReference type="GO" id="GO:0005886">
    <property type="term" value="C:plasma membrane"/>
    <property type="evidence" value="ECO:0007669"/>
    <property type="project" value="UniProtKB-SubCell"/>
</dbReference>
<dbReference type="GO" id="GO:0042802">
    <property type="term" value="F:identical protein binding"/>
    <property type="evidence" value="ECO:0000353"/>
    <property type="project" value="IntAct"/>
</dbReference>
<dbReference type="GO" id="GO:0008233">
    <property type="term" value="F:peptidase activity"/>
    <property type="evidence" value="ECO:0000315"/>
    <property type="project" value="EcoliWiki"/>
</dbReference>
<dbReference type="GO" id="GO:0004252">
    <property type="term" value="F:serine-type endopeptidase activity"/>
    <property type="evidence" value="ECO:0000315"/>
    <property type="project" value="EcoCyc"/>
</dbReference>
<dbReference type="GO" id="GO:0008236">
    <property type="term" value="F:serine-type peptidase activity"/>
    <property type="evidence" value="ECO:0000315"/>
    <property type="project" value="EcoliWiki"/>
</dbReference>
<dbReference type="GO" id="GO:0071218">
    <property type="term" value="P:cellular response to misfolded protein"/>
    <property type="evidence" value="ECO:0000315"/>
    <property type="project" value="EcoCyc"/>
</dbReference>
<dbReference type="GO" id="GO:0006508">
    <property type="term" value="P:proteolysis"/>
    <property type="evidence" value="ECO:0000314"/>
    <property type="project" value="EcoliWiki"/>
</dbReference>
<dbReference type="CDD" id="cd06777">
    <property type="entry name" value="cpPDZ_DegS"/>
    <property type="match status" value="1"/>
</dbReference>
<dbReference type="FunFam" id="2.30.42.10:FF:000077">
    <property type="entry name" value="Periplasmic serine peptidase DegS"/>
    <property type="match status" value="1"/>
</dbReference>
<dbReference type="FunFam" id="2.40.10.10:FF:000001">
    <property type="entry name" value="Periplasmic serine protease DegS"/>
    <property type="match status" value="1"/>
</dbReference>
<dbReference type="FunFam" id="2.40.10.10:FF:000009">
    <property type="entry name" value="Serine endoprotease DegS, periplasmic"/>
    <property type="match status" value="1"/>
</dbReference>
<dbReference type="Gene3D" id="2.30.42.10">
    <property type="match status" value="1"/>
</dbReference>
<dbReference type="Gene3D" id="2.40.10.10">
    <property type="entry name" value="Trypsin-like serine proteases"/>
    <property type="match status" value="2"/>
</dbReference>
<dbReference type="InterPro" id="IPR001478">
    <property type="entry name" value="PDZ"/>
</dbReference>
<dbReference type="InterPro" id="IPR036034">
    <property type="entry name" value="PDZ_sf"/>
</dbReference>
<dbReference type="InterPro" id="IPR011783">
    <property type="entry name" value="Pept_S1C_DegS"/>
</dbReference>
<dbReference type="InterPro" id="IPR009003">
    <property type="entry name" value="Peptidase_S1_PA"/>
</dbReference>
<dbReference type="InterPro" id="IPR043504">
    <property type="entry name" value="Peptidase_S1_PA_chymotrypsin"/>
</dbReference>
<dbReference type="InterPro" id="IPR001940">
    <property type="entry name" value="Peptidase_S1C"/>
</dbReference>
<dbReference type="NCBIfam" id="NF008147">
    <property type="entry name" value="PRK10898.1"/>
    <property type="match status" value="1"/>
</dbReference>
<dbReference type="NCBIfam" id="TIGR02038">
    <property type="entry name" value="protease_degS"/>
    <property type="match status" value="1"/>
</dbReference>
<dbReference type="PANTHER" id="PTHR22939:SF101">
    <property type="entry name" value="PERIPLASMIC PH-DEPENDENT SERINE ENDOPROTEASE DEGQ"/>
    <property type="match status" value="1"/>
</dbReference>
<dbReference type="PANTHER" id="PTHR22939">
    <property type="entry name" value="SERINE PROTEASE FAMILY S1C HTRA-RELATED"/>
    <property type="match status" value="1"/>
</dbReference>
<dbReference type="Pfam" id="PF13180">
    <property type="entry name" value="PDZ_2"/>
    <property type="match status" value="1"/>
</dbReference>
<dbReference type="Pfam" id="PF13365">
    <property type="entry name" value="Trypsin_2"/>
    <property type="match status" value="1"/>
</dbReference>
<dbReference type="PRINTS" id="PR00834">
    <property type="entry name" value="PROTEASES2C"/>
</dbReference>
<dbReference type="SMART" id="SM00228">
    <property type="entry name" value="PDZ"/>
    <property type="match status" value="1"/>
</dbReference>
<dbReference type="SUPFAM" id="SSF50156">
    <property type="entry name" value="PDZ domain-like"/>
    <property type="match status" value="1"/>
</dbReference>
<dbReference type="SUPFAM" id="SSF50494">
    <property type="entry name" value="Trypsin-like serine proteases"/>
    <property type="match status" value="1"/>
</dbReference>
<dbReference type="PROSITE" id="PS50106">
    <property type="entry name" value="PDZ"/>
    <property type="match status" value="1"/>
</dbReference>
<protein>
    <recommendedName>
        <fullName>Serine endoprotease DegS</fullName>
        <ecNumber>3.4.21.107</ecNumber>
    </recommendedName>
    <alternativeName>
        <fullName>Site-1 protease DegS</fullName>
        <shortName>S1P protease DegS</shortName>
    </alternativeName>
    <alternativeName>
        <fullName>Site-1-type intramembrane protease</fullName>
    </alternativeName>
</protein>
<organism>
    <name type="scientific">Escherichia coli (strain K12)</name>
    <dbReference type="NCBI Taxonomy" id="83333"/>
    <lineage>
        <taxon>Bacteria</taxon>
        <taxon>Pseudomonadati</taxon>
        <taxon>Pseudomonadota</taxon>
        <taxon>Gammaproteobacteria</taxon>
        <taxon>Enterobacterales</taxon>
        <taxon>Enterobacteriaceae</taxon>
        <taxon>Escherichia</taxon>
    </lineage>
</organism>
<name>DEGS_ECOLI</name>
<evidence type="ECO:0000255" key="1"/>
<evidence type="ECO:0000255" key="2">
    <source>
        <dbReference type="PROSITE-ProRule" id="PRU00143"/>
    </source>
</evidence>
<evidence type="ECO:0000269" key="3">
    <source>
    </source>
</evidence>
<evidence type="ECO:0000269" key="4">
    <source>
    </source>
</evidence>
<evidence type="ECO:0000269" key="5">
    <source>
    </source>
</evidence>
<evidence type="ECO:0000269" key="6">
    <source>
    </source>
</evidence>
<evidence type="ECO:0000269" key="7">
    <source>
    </source>
</evidence>
<evidence type="ECO:0000269" key="8">
    <source>
    </source>
</evidence>
<evidence type="ECO:0000269" key="9">
    <source>
    </source>
</evidence>
<evidence type="ECO:0000269" key="10">
    <source>
    </source>
</evidence>
<evidence type="ECO:0000269" key="11">
    <source>
    </source>
</evidence>
<evidence type="ECO:0000269" key="12">
    <source>
    </source>
</evidence>
<evidence type="ECO:0000269" key="13">
    <source>
    </source>
</evidence>
<evidence type="ECO:0000269" key="14">
    <source>
    </source>
</evidence>
<evidence type="ECO:0000269" key="15">
    <source>
    </source>
</evidence>
<evidence type="ECO:0000269" key="16">
    <source>
    </source>
</evidence>
<evidence type="ECO:0000269" key="17">
    <source>
    </source>
</evidence>
<evidence type="ECO:0000269" key="18">
    <source>
    </source>
</evidence>
<evidence type="ECO:0000269" key="19">
    <source>
    </source>
</evidence>
<evidence type="ECO:0000305" key="20"/>
<evidence type="ECO:0000305" key="21">
    <source>
    </source>
</evidence>
<evidence type="ECO:0007829" key="22">
    <source>
        <dbReference type="PDB" id="1SOT"/>
    </source>
</evidence>
<evidence type="ECO:0007829" key="23">
    <source>
        <dbReference type="PDB" id="1TE0"/>
    </source>
</evidence>
<evidence type="ECO:0007829" key="24">
    <source>
        <dbReference type="PDB" id="3LGI"/>
    </source>
</evidence>
<evidence type="ECO:0007829" key="25">
    <source>
        <dbReference type="PDB" id="4RQZ"/>
    </source>
</evidence>
<proteinExistence type="evidence at protein level"/>
<sequence length="355" mass="37581">MFVKLLRSVAIGLIVGAILLVAMPSLRSLNPLSTPQFDSTDETPASYNLAVRRAAPAVVNVYNRGLNTNSHNQLEIRTLGSGVIMDQRGYIITNKHVINDADQIIVALQDGRVFEALLVGSDSLTDLAVLKINATGGLPTIPINARRVPHIGDVVLAIGNPYNLGQTITQGIISATGRIGLNPTGRQNFLQTDASINHGNSGGALVNSLGELMGINTLSFDKSNDGETPEGIGFAIPFQLATKIMDKLIRDGRVIRGYIGIGGREIAPLHAQGGGIDQLQGIVVNEVSPDGPAANAGIQVNDLIISVDNKPAISALETMDQVAEIRPGSVIPVVVMRDDKQLTLQVTIQEYPATN</sequence>
<reference key="1">
    <citation type="journal article" date="1996" name="J. Bacteriol.">
        <title>Multicopy suppressors of prc mutant Escherichia coli include two HtrA (DegP) protease homologs (HhoAB), DksA, and a truncated R1pA.</title>
        <authorList>
            <person name="Bass S."/>
            <person name="Gu Q."/>
            <person name="Christen A."/>
        </authorList>
    </citation>
    <scope>NUCLEOTIDE SEQUENCE [GENOMIC DNA]</scope>
    <source>
        <strain>K12 / W3110 / ATCC 27325 / DSM 5911</strain>
    </source>
</reference>
<reference key="2">
    <citation type="journal article" date="1996" name="J. Bacteriol.">
        <title>Characterization of degQ and degS, Escherichia coli genes encoding homologs of the DegP protease.</title>
        <authorList>
            <person name="Waller P.R."/>
            <person name="Sauer R.T."/>
        </authorList>
    </citation>
    <scope>NUCLEOTIDE SEQUENCE [GENOMIC DNA]</scope>
    <scope>DISRUPTION PHENOTYPE</scope>
    <scope>NOMENCLATURE</scope>
    <source>
        <strain>K12 / W3110 / ATCC 27325 / DSM 5911</strain>
    </source>
</reference>
<reference key="3">
    <citation type="journal article" date="1997" name="Science">
        <title>The complete genome sequence of Escherichia coli K-12.</title>
        <authorList>
            <person name="Blattner F.R."/>
            <person name="Plunkett G. III"/>
            <person name="Bloch C.A."/>
            <person name="Perna N.T."/>
            <person name="Burland V."/>
            <person name="Riley M."/>
            <person name="Collado-Vides J."/>
            <person name="Glasner J.D."/>
            <person name="Rode C.K."/>
            <person name="Mayhew G.F."/>
            <person name="Gregor J."/>
            <person name="Davis N.W."/>
            <person name="Kirkpatrick H.A."/>
            <person name="Goeden M.A."/>
            <person name="Rose D.J."/>
            <person name="Mau B."/>
            <person name="Shao Y."/>
        </authorList>
    </citation>
    <scope>NUCLEOTIDE SEQUENCE [LARGE SCALE GENOMIC DNA]</scope>
    <source>
        <strain>K12 / MG1655 / ATCC 47076</strain>
    </source>
</reference>
<reference key="4">
    <citation type="journal article" date="2006" name="Mol. Syst. Biol.">
        <title>Highly accurate genome sequences of Escherichia coli K-12 strains MG1655 and W3110.</title>
        <authorList>
            <person name="Hayashi K."/>
            <person name="Morooka N."/>
            <person name="Yamamoto Y."/>
            <person name="Fujita K."/>
            <person name="Isono K."/>
            <person name="Choi S."/>
            <person name="Ohtsubo E."/>
            <person name="Baba T."/>
            <person name="Wanner B.L."/>
            <person name="Mori H."/>
            <person name="Horiuchi T."/>
        </authorList>
    </citation>
    <scope>NUCLEOTIDE SEQUENCE [LARGE SCALE GENOMIC DNA]</scope>
    <source>
        <strain>K12 / W3110 / ATCC 27325 / DSM 5911</strain>
    </source>
</reference>
<reference key="5">
    <citation type="journal article" date="1987" name="Arch. Microbiol.">
        <title>Cloning and sequence of the mdh structural gene of Escherichia coli coding for malate dehydrogenase.</title>
        <authorList>
            <person name="Vogel R.F."/>
            <person name="Entian K.-D."/>
            <person name="Mecke D."/>
        </authorList>
    </citation>
    <scope>PRELIMINARY NUCLEOTIDE SEQUENCE [GENOMIC DNA] OF 82-355</scope>
</reference>
<reference key="6">
    <citation type="journal article" date="1990" name="Semin. Virol.">
        <title>Structural and catalytic models of trypsin-like viral proteases.</title>
        <authorList>
            <person name="Bazan J.F."/>
            <person name="Fletterick R.J."/>
        </authorList>
    </citation>
    <scope>IDENTIFICATION</scope>
</reference>
<reference key="7">
    <citation type="journal article" date="1999" name="Genes Dev.">
        <title>The Escherichia coli sigma(E)-dependent extracytoplasmic stress response is controlled by the regulated proteolysis of an anti-sigma factor.</title>
        <authorList>
            <person name="Ades S.E."/>
            <person name="Connolly L.E."/>
            <person name="Alba B.M."/>
            <person name="Gross C.A."/>
        </authorList>
    </citation>
    <scope>FUNCTION</scope>
    <scope>DISRUPTION PHENOTYPE</scope>
    <scope>MUTAGENESIS OF SER-201</scope>
    <source>
        <strain>K12 / MC1061 / ATCC 53338 / DSM 7140</strain>
    </source>
</reference>
<reference key="8">
    <citation type="journal article" date="2001" name="Mol. Microbiol.">
        <title>degS (hhoB) is an essential Escherichia coli gene whose indispensable function is to provide sigma (E) activity.</title>
        <authorList>
            <person name="Alba B.M."/>
            <person name="Zhong H.J."/>
            <person name="Pelayo J.C."/>
            <person name="Gross C.A."/>
        </authorList>
    </citation>
    <scope>FUNCTION</scope>
    <scope>SUBCELLULAR LOCATION</scope>
    <scope>TOPOLOGY</scope>
    <scope>DISRUPTION PHENOTYPE</scope>
    <source>
        <strain>K12 / MC1061 / ATCC 53338 / DSM 7140</strain>
    </source>
</reference>
<reference key="9">
    <citation type="journal article" date="2002" name="Genes Dev.">
        <title>YaeL (EcfE) activates the sigma(E) pathway of stress response through a site-2 cleavage of anti-sigma(E), RseA.</title>
        <authorList>
            <person name="Kanehara K."/>
            <person name="Ito K."/>
            <person name="Akiyama Y."/>
        </authorList>
    </citation>
    <scope>FUNCTION IN CLEAVAGE OF RSEA</scope>
    <scope>DISRUPTION PHENOTYPE</scope>
    <source>
        <strain>K12</strain>
    </source>
</reference>
<reference key="10">
    <citation type="journal article" date="2002" name="Genes Dev.">
        <title>DegS and YaeL participate sequentially in the cleavage of RseA to activate the sigma(E)-dependent extracytoplasmic stress response.</title>
        <authorList>
            <person name="Alba B.M."/>
            <person name="Leeds J.A."/>
            <person name="Onufryk C."/>
            <person name="Lu C.Z."/>
            <person name="Gross C.A."/>
        </authorList>
    </citation>
    <scope>FUNCTION IN CLEAVAGE OF RSEA</scope>
    <scope>DISRUPTION PHENOTYPE</scope>
    <source>
        <strain>K12</strain>
    </source>
</reference>
<reference key="11">
    <citation type="journal article" date="2003" name="Cell">
        <title>OMP peptide signals initiate the envelope-stress response by activating DegS protease via relief of inhibition mediated by its PDZ domain.</title>
        <authorList>
            <person name="Walsh N.P."/>
            <person name="Alba B.M."/>
            <person name="Bose B."/>
            <person name="Gross C.A."/>
            <person name="Sauer R.T."/>
        </authorList>
    </citation>
    <scope>FUNCTION AS A SENSOR</scope>
    <scope>FUNCTION IN CLEAVAGE OF RSEA</scope>
    <scope>ACTIVITY REGULATION</scope>
    <scope>BINDING OF PEPTIDES</scope>
    <scope>SUBUNIT</scope>
    <scope>DOMAIN</scope>
    <source>
        <strain>K12 / MC1061 / ATCC 53338 / DSM 7140</strain>
    </source>
</reference>
<reference key="12">
    <citation type="journal article" date="2007" name="Proc. Natl. Acad. Sci. U.S.A.">
        <title>Inhibition of regulated proteolysis by RseB.</title>
        <authorList>
            <person name="Cezairliyan B.O."/>
            <person name="Sauer R.T."/>
        </authorList>
    </citation>
    <scope>FUNCTION IN CLEAVAGE OF RSEA</scope>
    <scope>ACTIVITY REGULATION</scope>
    <scope>DOMAIN</scope>
</reference>
<reference key="13">
    <citation type="journal article" date="2008" name="J. Biol. Chem.">
        <title>A pair of circularly permutated PDZ domains control RseP, the S2P family intramembrane protease of Escherichia coli.</title>
        <authorList>
            <person name="Inaba K."/>
            <person name="Suzuki M."/>
            <person name="Maegawa K."/>
            <person name="Akiyama S."/>
            <person name="Ito K."/>
            <person name="Akiyama Y."/>
        </authorList>
    </citation>
    <scope>FUNCTION IN CLEAVAGE OF RSEA</scope>
    <scope>FUNCTION AS A SENSOR</scope>
    <source>
        <strain>K12</strain>
    </source>
</reference>
<reference key="14">
    <citation type="journal article" date="2009" name="Proc. Natl. Acad. Sci. U.S.A.">
        <title>Cleavage of RseA by RseP requires a carboxyl-terminal hydrophobic amino acid following DegS cleavage.</title>
        <authorList>
            <person name="Li X."/>
            <person name="Wang B."/>
            <person name="Feng L."/>
            <person name="Kang H."/>
            <person name="Qi Y."/>
            <person name="Wang J."/>
            <person name="Shi Y."/>
        </authorList>
    </citation>
    <scope>FUNCTION IN CLEAVAGE OF RSEA</scope>
    <scope>FUNCTION AS A SENSOR</scope>
</reference>
<reference key="15">
    <citation type="journal article" date="2009" name="Res. Microbiol.">
        <title>Structure, function and regulation of the conserved serine proteases DegP and DegS of Escherichia coli.</title>
        <authorList>
            <person name="Meltzer M."/>
            <person name="Hasenbein S."/>
            <person name="Mamant N."/>
            <person name="Merdanovic M."/>
            <person name="Poepsel S."/>
            <person name="Hauske P."/>
            <person name="Kaiser M."/>
            <person name="Huber R."/>
            <person name="Krojer T."/>
            <person name="Clausen T."/>
            <person name="Ehrmann M."/>
        </authorList>
    </citation>
    <scope>FUNCTION AS A REGULATORY PROTEASE</scope>
</reference>
<reference key="16">
    <citation type="journal article" date="2011" name="Proc. Natl. Acad. Sci. U.S.A.">
        <title>Signal integration by DegS and RseB governs the sigma-E-mediated envelope stress response in Escherichia coli.</title>
        <authorList>
            <person name="Chaba R."/>
            <person name="Alba B.M."/>
            <person name="Guo M.S."/>
            <person name="Sohn J."/>
            <person name="Ahuja N."/>
            <person name="Sauer R.T."/>
            <person name="Gross C.A."/>
        </authorList>
    </citation>
    <scope>MUTAGENESIS OF HIS-198 AND LYS-243</scope>
    <source>
        <strain>K12 / MC1061 / ATCC 53338 / DSM 7140</strain>
    </source>
</reference>
<reference key="17">
    <citation type="journal article" date="2004" name="Cell">
        <title>Crystal structure of the DegS stress sensor: How a PDZ domain recognizes misfolded protein and activates a protease.</title>
        <authorList>
            <person name="Wilken C."/>
            <person name="Kitzing K."/>
            <person name="Kurzbauer R."/>
            <person name="Ehrmann M."/>
            <person name="Clausen T."/>
        </authorList>
    </citation>
    <scope>X-RAY CRYSTALLOGRAPHY (3.05 ANGSTROMS) OF 43-355 IN COMPLEX WITH ANALOGS SUBSTRATE</scope>
    <scope>MUTAGENESIS OF TYR-162; PRO-183 AND GLU-227</scope>
    <scope>REACTION MECHANISM</scope>
    <scope>SUBUNIT</scope>
    <scope>ACTIVE SITE</scope>
</reference>
<reference key="18">
    <citation type="journal article" date="2004" name="FEBS Lett.">
        <title>Structural analysis of DegS, a stress sensor of the bacterial periplasm.</title>
        <authorList>
            <person name="Zeth K."/>
        </authorList>
    </citation>
    <scope>X-RAY CRYSTALLOGRAPHY (3.05 ANGSTROMS) OF 37-354</scope>
    <scope>SUBUNIT</scope>
    <scope>ACTIVE SITE</scope>
</reference>
<reference key="19">
    <citation type="journal article" date="2007" name="Cell">
        <title>Allosteric activation of DegS, a stress sensor PDZ protease.</title>
        <authorList>
            <person name="Sohn J."/>
            <person name="Grant R.A."/>
            <person name="Sauer R.T."/>
        </authorList>
    </citation>
    <scope>X-RAY CRYSTALLOGRAPHY (2.5 ANGSTROMS) OF 27-256 AND MUTANT ALA-178</scope>
    <scope>MUTAGENESIS OF ASP-122; TYR-162; ARG-178; PRO-183; GLU-227; LYS-243; ARG-256 AND ASP-320</scope>
    <scope>BIOPHYSICOCHEMICAL PROPERTIES</scope>
    <scope>SUBUNIT</scope>
</reference>
<reference key="20">
    <citation type="journal article" date="2007" name="Genes Dev.">
        <title>Regulation of the sigmaE stress response by DegS: how the PDZ domain keeps the protease inactive in the resting state and allows integration of different OMP-derived stress signals upon folding stress.</title>
        <authorList>
            <person name="Hasselblatt H."/>
            <person name="Kurzbauer R."/>
            <person name="Wilken C."/>
            <person name="Krojer T."/>
            <person name="Sawa J."/>
            <person name="Kurt J."/>
            <person name="Kirk R."/>
            <person name="Hasenbein S."/>
            <person name="Ehrmann M."/>
            <person name="Clausen T."/>
        </authorList>
    </citation>
    <scope>X-RAY CRYSTALLOGRAPHY (2.6 ANGSTROMS) OF 43-252 IN COMPLEX WITH ANALOGS SUBSTRATE</scope>
    <scope>FUNCTION AS A SENSOR</scope>
    <scope>FUNCTION AS A PROTEASE</scope>
    <scope>ACTIVITY REGULATION</scope>
    <scope>BINDING OF PEPTIDE</scope>
    <scope>SUBUNIT</scope>
    <scope>MUTAGENESIS OF ASP-122 AND TYR-162</scope>
</reference>
<reference key="21">
    <citation type="journal article" date="2009" name="Structure">
        <title>OMP peptides activate the DegS stress-sensor protease by a relief of inhibition mechanism.</title>
        <authorList>
            <person name="Sohn J."/>
            <person name="Grant R.A."/>
            <person name="Sauer R.T."/>
        </authorList>
    </citation>
    <scope>X-RAY CRYSTALLOGRAPHY (2.6 ANGSTROMS) OF 27-256 OF MUTANT ALA-198 IN COMPLEX WITH ANALOGS SUBSTRATE</scope>
    <scope>MUTAGENESIS OF HIS-198</scope>
    <scope>ACTIVITY REGULATION</scope>
    <scope>BIOPHYSICOCHEMICAL PROPERTIES</scope>
    <scope>SUBUNIT</scope>
</reference>
<reference key="22">
    <citation type="journal article" date="2010" name="J. Biol. Chem.">
        <title>Allostery is an intrinsic property of the protease domain of DegS: implications for enzyme function and evolution.</title>
        <authorList>
            <person name="Sohn J."/>
            <person name="Grant R.A."/>
            <person name="Sauer R.T."/>
        </authorList>
    </citation>
    <scope>X-RAY CRYSTALLOGRAPHY (2.35 ANGSTROMS) OF 27-256 OF MUTANT ALA-162; ALA-178; ALA-191: GLN-198</scope>
    <scope>MUTAGENESIS OF TYR-162; ARG-178; GLN-191 AND HIS-198</scope>
    <scope>ACTIVITY REGULATION</scope>
    <scope>SUBUNIT</scope>
    <scope>ACTIVE SITE</scope>
</reference>